<evidence type="ECO:0000255" key="1">
    <source>
        <dbReference type="HAMAP-Rule" id="MF_01062"/>
    </source>
</evidence>
<proteinExistence type="inferred from homology"/>
<organism>
    <name type="scientific">Burkholderia mallei (strain NCTC 10229)</name>
    <dbReference type="NCBI Taxonomy" id="412022"/>
    <lineage>
        <taxon>Bacteria</taxon>
        <taxon>Pseudomonadati</taxon>
        <taxon>Pseudomonadota</taxon>
        <taxon>Betaproteobacteria</taxon>
        <taxon>Burkholderiales</taxon>
        <taxon>Burkholderiaceae</taxon>
        <taxon>Burkholderia</taxon>
        <taxon>pseudomallei group</taxon>
    </lineage>
</organism>
<keyword id="KW-0418">Kinase</keyword>
<keyword id="KW-0547">Nucleotide-binding</keyword>
<keyword id="KW-0723">Serine/threonine-protein kinase</keyword>
<keyword id="KW-0808">Transferase</keyword>
<feature type="chain" id="PRO_0000316647" description="Putative phosphoenolpyruvate synthase regulatory protein">
    <location>
        <begin position="1"/>
        <end position="271"/>
    </location>
</feature>
<feature type="binding site" evidence="1">
    <location>
        <begin position="151"/>
        <end position="158"/>
    </location>
    <ligand>
        <name>ADP</name>
        <dbReference type="ChEBI" id="CHEBI:456216"/>
    </ligand>
</feature>
<protein>
    <recommendedName>
        <fullName evidence="1">Putative phosphoenolpyruvate synthase regulatory protein</fullName>
        <shortName evidence="1">PEP synthase regulatory protein</shortName>
        <shortName evidence="1">PSRP</shortName>
        <ecNumber evidence="1">2.7.11.33</ecNumber>
        <ecNumber evidence="1">2.7.4.28</ecNumber>
    </recommendedName>
    <alternativeName>
        <fullName evidence="1">Pyruvate, water dikinase regulatory protein</fullName>
    </alternativeName>
</protein>
<gene>
    <name type="ordered locus">BMA10229_A3272</name>
</gene>
<dbReference type="EC" id="2.7.11.33" evidence="1"/>
<dbReference type="EC" id="2.7.4.28" evidence="1"/>
<dbReference type="EMBL" id="CP000546">
    <property type="protein sequence ID" value="ABN01051.1"/>
    <property type="molecule type" value="Genomic_DNA"/>
</dbReference>
<dbReference type="RefSeq" id="WP_004192738.1">
    <property type="nucleotide sequence ID" value="NC_008836.1"/>
</dbReference>
<dbReference type="SMR" id="A2SB89"/>
<dbReference type="KEGG" id="bml:BMA10229_A3272"/>
<dbReference type="HOGENOM" id="CLU_046206_1_0_4"/>
<dbReference type="Proteomes" id="UP000002283">
    <property type="component" value="Chromosome I"/>
</dbReference>
<dbReference type="GO" id="GO:0043531">
    <property type="term" value="F:ADP binding"/>
    <property type="evidence" value="ECO:0007669"/>
    <property type="project" value="UniProtKB-UniRule"/>
</dbReference>
<dbReference type="GO" id="GO:0005524">
    <property type="term" value="F:ATP binding"/>
    <property type="evidence" value="ECO:0007669"/>
    <property type="project" value="InterPro"/>
</dbReference>
<dbReference type="GO" id="GO:0016776">
    <property type="term" value="F:phosphotransferase activity, phosphate group as acceptor"/>
    <property type="evidence" value="ECO:0007669"/>
    <property type="project" value="UniProtKB-UniRule"/>
</dbReference>
<dbReference type="GO" id="GO:0004674">
    <property type="term" value="F:protein serine/threonine kinase activity"/>
    <property type="evidence" value="ECO:0007669"/>
    <property type="project" value="UniProtKB-UniRule"/>
</dbReference>
<dbReference type="HAMAP" id="MF_01062">
    <property type="entry name" value="PSRP"/>
    <property type="match status" value="1"/>
</dbReference>
<dbReference type="InterPro" id="IPR005177">
    <property type="entry name" value="Kinase-pyrophosphorylase"/>
</dbReference>
<dbReference type="InterPro" id="IPR026530">
    <property type="entry name" value="PSRP"/>
</dbReference>
<dbReference type="NCBIfam" id="NF003742">
    <property type="entry name" value="PRK05339.1"/>
    <property type="match status" value="1"/>
</dbReference>
<dbReference type="PANTHER" id="PTHR31756">
    <property type="entry name" value="PYRUVATE, PHOSPHATE DIKINASE REGULATORY PROTEIN 1, CHLOROPLASTIC"/>
    <property type="match status" value="1"/>
</dbReference>
<dbReference type="PANTHER" id="PTHR31756:SF3">
    <property type="entry name" value="PYRUVATE, PHOSPHATE DIKINASE REGULATORY PROTEIN 1, CHLOROPLASTIC"/>
    <property type="match status" value="1"/>
</dbReference>
<dbReference type="Pfam" id="PF03618">
    <property type="entry name" value="Kinase-PPPase"/>
    <property type="match status" value="1"/>
</dbReference>
<reference key="1">
    <citation type="journal article" date="2010" name="Genome Biol. Evol.">
        <title>Continuing evolution of Burkholderia mallei through genome reduction and large-scale rearrangements.</title>
        <authorList>
            <person name="Losada L."/>
            <person name="Ronning C.M."/>
            <person name="DeShazer D."/>
            <person name="Woods D."/>
            <person name="Fedorova N."/>
            <person name="Kim H.S."/>
            <person name="Shabalina S.A."/>
            <person name="Pearson T.R."/>
            <person name="Brinkac L."/>
            <person name="Tan P."/>
            <person name="Nandi T."/>
            <person name="Crabtree J."/>
            <person name="Badger J."/>
            <person name="Beckstrom-Sternberg S."/>
            <person name="Saqib M."/>
            <person name="Schutzer S.E."/>
            <person name="Keim P."/>
            <person name="Nierman W.C."/>
        </authorList>
    </citation>
    <scope>NUCLEOTIDE SEQUENCE [LARGE SCALE GENOMIC DNA]</scope>
    <source>
        <strain>NCTC 10229</strain>
    </source>
</reference>
<name>PSRP_BURM9</name>
<sequence>MLPTVFIVSDGTGITAETFAHSILSQFDQKFRLVRVPFIDSIEKAYDTVRKINDAAQHDGRRPIVFTTLVDGESNEIVKRSNALVLDMFQRFVEPLEQELQLKSSHAMGRVHQNADTEEYKTRIEAINFSLAHDDGQSNRNLADADVILIGVSRSGKTPTSLYLAMQYGVKAANYPLIPEDFERGKLPTPLHPHRDKLFGLSIDPMRLSEIRNERRPGSKYAAPENCRYEINEAEAMMRREGVKWLSSTHKSIEEIATTILQEIKLERQSY</sequence>
<comment type="function">
    <text evidence="1">Bifunctional serine/threonine kinase and phosphorylase involved in the regulation of the phosphoenolpyruvate synthase (PEPS) by catalyzing its phosphorylation/dephosphorylation.</text>
</comment>
<comment type="catalytic activity">
    <reaction evidence="1">
        <text>[pyruvate, water dikinase] + ADP = [pyruvate, water dikinase]-phosphate + AMP + H(+)</text>
        <dbReference type="Rhea" id="RHEA:46020"/>
        <dbReference type="Rhea" id="RHEA-COMP:11425"/>
        <dbReference type="Rhea" id="RHEA-COMP:11426"/>
        <dbReference type="ChEBI" id="CHEBI:15378"/>
        <dbReference type="ChEBI" id="CHEBI:43176"/>
        <dbReference type="ChEBI" id="CHEBI:68546"/>
        <dbReference type="ChEBI" id="CHEBI:456215"/>
        <dbReference type="ChEBI" id="CHEBI:456216"/>
        <dbReference type="EC" id="2.7.11.33"/>
    </reaction>
</comment>
<comment type="catalytic activity">
    <reaction evidence="1">
        <text>[pyruvate, water dikinase]-phosphate + phosphate + H(+) = [pyruvate, water dikinase] + diphosphate</text>
        <dbReference type="Rhea" id="RHEA:48580"/>
        <dbReference type="Rhea" id="RHEA-COMP:11425"/>
        <dbReference type="Rhea" id="RHEA-COMP:11426"/>
        <dbReference type="ChEBI" id="CHEBI:15378"/>
        <dbReference type="ChEBI" id="CHEBI:33019"/>
        <dbReference type="ChEBI" id="CHEBI:43176"/>
        <dbReference type="ChEBI" id="CHEBI:43474"/>
        <dbReference type="ChEBI" id="CHEBI:68546"/>
        <dbReference type="EC" id="2.7.4.28"/>
    </reaction>
</comment>
<comment type="similarity">
    <text evidence="1">Belongs to the pyruvate, phosphate/water dikinase regulatory protein family. PSRP subfamily.</text>
</comment>
<accession>A2SB89</accession>